<name>LSRB_SHIFL</name>
<keyword id="KW-0574">Periplasm</keyword>
<keyword id="KW-1185">Reference proteome</keyword>
<keyword id="KW-0732">Signal</keyword>
<sequence>MTLHRFKKIALLSALGIAAISMNVQAAERIAFIPKLVGVGFFTSGGNGAQQAGKELSVDVTYDGPTEPSVSGQVQLINNFVNQGYNAIIVSAVSPDGLCPALKRAMQRGVRVLTWDSDTKPECRSYYINQGTPAQLGGMLVDMAARQVNKDKAKVAFFYSSPTVTDQNQWVKEAKAKIAKEHPGWEIVTTQFGYNDATKSLQTAEGILKAYSDLDAIIAPDANALPAAAQAAENLKNDKVAIVGFSTPNVMRPYVERGTVKEFGLWDVVQQGKISVYVADVLLKKGSMKTGDKLDIQGVGQVEVSPNSVQGYDYEADGNGIVLLPERVIFNKENIGKYDF</sequence>
<gene>
    <name type="primary">lsrB</name>
    <name type="ordered locus">SF1586</name>
    <name type="ordered locus">S1712</name>
</gene>
<comment type="function">
    <text evidence="1">Part of the ABC transporter complex LsrABCD involved in autoinducer 2 (AI-2) import. Binds AI-2 and delivers it to the LsrC and LsrD permeases (By similarity).</text>
</comment>
<comment type="subunit">
    <text evidence="1">The complex is composed of two ATP-binding proteins (LsrA), two transmembrane proteins (LsrC and LsrD) and a solute-binding protein (LsrB).</text>
</comment>
<comment type="subcellular location">
    <subcellularLocation>
        <location evidence="3">Periplasm</location>
    </subcellularLocation>
</comment>
<comment type="similarity">
    <text evidence="3">Belongs to the bacterial solute-binding protein 2 family.</text>
</comment>
<comment type="sequence caution" evidence="3">
    <conflict type="frameshift">
        <sequence resource="EMBL" id="AE005674"/>
    </conflict>
</comment>
<comment type="sequence caution" evidence="3">
    <conflict type="frameshift">
        <sequence resource="EMBL" id="AE014073"/>
    </conflict>
</comment>
<evidence type="ECO:0000250" key="1"/>
<evidence type="ECO:0000255" key="2"/>
<evidence type="ECO:0000305" key="3"/>
<protein>
    <recommendedName>
        <fullName>Autoinducer 2-binding protein LsrB</fullName>
        <shortName>AI-2-binding protein LsrB</shortName>
    </recommendedName>
</protein>
<reference key="1">
    <citation type="journal article" date="2002" name="Nucleic Acids Res.">
        <title>Genome sequence of Shigella flexneri 2a: insights into pathogenicity through comparison with genomes of Escherichia coli K12 and O157.</title>
        <authorList>
            <person name="Jin Q."/>
            <person name="Yuan Z."/>
            <person name="Xu J."/>
            <person name="Wang Y."/>
            <person name="Shen Y."/>
            <person name="Lu W."/>
            <person name="Wang J."/>
            <person name="Liu H."/>
            <person name="Yang J."/>
            <person name="Yang F."/>
            <person name="Zhang X."/>
            <person name="Zhang J."/>
            <person name="Yang G."/>
            <person name="Wu H."/>
            <person name="Qu D."/>
            <person name="Dong J."/>
            <person name="Sun L."/>
            <person name="Xue Y."/>
            <person name="Zhao A."/>
            <person name="Gao Y."/>
            <person name="Zhu J."/>
            <person name="Kan B."/>
            <person name="Ding K."/>
            <person name="Chen S."/>
            <person name="Cheng H."/>
            <person name="Yao Z."/>
            <person name="He B."/>
            <person name="Chen R."/>
            <person name="Ma D."/>
            <person name="Qiang B."/>
            <person name="Wen Y."/>
            <person name="Hou Y."/>
            <person name="Yu J."/>
        </authorList>
    </citation>
    <scope>NUCLEOTIDE SEQUENCE [LARGE SCALE GENOMIC DNA]</scope>
    <source>
        <strain>301 / Serotype 2a</strain>
    </source>
</reference>
<reference key="2">
    <citation type="journal article" date="2003" name="Infect. Immun.">
        <title>Complete genome sequence and comparative genomics of Shigella flexneri serotype 2a strain 2457T.</title>
        <authorList>
            <person name="Wei J."/>
            <person name="Goldberg M.B."/>
            <person name="Burland V."/>
            <person name="Venkatesan M.M."/>
            <person name="Deng W."/>
            <person name="Fournier G."/>
            <person name="Mayhew G.F."/>
            <person name="Plunkett G. III"/>
            <person name="Rose D.J."/>
            <person name="Darling A."/>
            <person name="Mau B."/>
            <person name="Perna N.T."/>
            <person name="Payne S.M."/>
            <person name="Runyen-Janecky L.J."/>
            <person name="Zhou S."/>
            <person name="Schwartz D.C."/>
            <person name="Blattner F.R."/>
        </authorList>
    </citation>
    <scope>NUCLEOTIDE SEQUENCE [LARGE SCALE GENOMIC DNA]</scope>
    <source>
        <strain>ATCC 700930 / 2457T / Serotype 2a</strain>
    </source>
</reference>
<feature type="signal peptide" evidence="2">
    <location>
        <begin position="1"/>
        <end position="26"/>
    </location>
</feature>
<feature type="chain" id="PRO_0000351331" description="Autoinducer 2-binding protein LsrB">
    <location>
        <begin position="27"/>
        <end position="340"/>
    </location>
</feature>
<organism>
    <name type="scientific">Shigella flexneri</name>
    <dbReference type="NCBI Taxonomy" id="623"/>
    <lineage>
        <taxon>Bacteria</taxon>
        <taxon>Pseudomonadati</taxon>
        <taxon>Pseudomonadota</taxon>
        <taxon>Gammaproteobacteria</taxon>
        <taxon>Enterobacterales</taxon>
        <taxon>Enterobacteriaceae</taxon>
        <taxon>Shigella</taxon>
    </lineage>
</organism>
<proteinExistence type="inferred from homology"/>
<dbReference type="EMBL" id="AE005674">
    <property type="status" value="NOT_ANNOTATED_CDS"/>
    <property type="molecule type" value="Genomic_DNA"/>
</dbReference>
<dbReference type="EMBL" id="AE014073">
    <property type="status" value="NOT_ANNOTATED_CDS"/>
    <property type="molecule type" value="Genomic_DNA"/>
</dbReference>
<dbReference type="RefSeq" id="WP_134799240.1">
    <property type="nucleotide sequence ID" value="NZ_CP037996.1"/>
</dbReference>
<dbReference type="SMR" id="P0C887"/>
<dbReference type="Proteomes" id="UP000001006">
    <property type="component" value="Chromosome"/>
</dbReference>
<dbReference type="Proteomes" id="UP000002673">
    <property type="component" value="Chromosome"/>
</dbReference>
<dbReference type="GO" id="GO:0043190">
    <property type="term" value="C:ATP-binding cassette (ABC) transporter complex"/>
    <property type="evidence" value="ECO:0007669"/>
    <property type="project" value="InterPro"/>
</dbReference>
<dbReference type="GO" id="GO:0030288">
    <property type="term" value="C:outer membrane-bounded periplasmic space"/>
    <property type="evidence" value="ECO:0007669"/>
    <property type="project" value="TreeGrafter"/>
</dbReference>
<dbReference type="GO" id="GO:0030246">
    <property type="term" value="F:carbohydrate binding"/>
    <property type="evidence" value="ECO:0007669"/>
    <property type="project" value="TreeGrafter"/>
</dbReference>
<dbReference type="CDD" id="cd20003">
    <property type="entry name" value="PBP1_LsrB_Quorum_Sensing"/>
    <property type="match status" value="1"/>
</dbReference>
<dbReference type="Gene3D" id="3.40.50.2300">
    <property type="match status" value="2"/>
</dbReference>
<dbReference type="InterPro" id="IPR050555">
    <property type="entry name" value="Bact_Solute-Bind_Prot2"/>
</dbReference>
<dbReference type="InterPro" id="IPR030159">
    <property type="entry name" value="LsrB"/>
</dbReference>
<dbReference type="InterPro" id="IPR028082">
    <property type="entry name" value="Peripla_BP_I"/>
</dbReference>
<dbReference type="InterPro" id="IPR025997">
    <property type="entry name" value="SBP_2_dom"/>
</dbReference>
<dbReference type="NCBIfam" id="NF011937">
    <property type="entry name" value="PRK15408.1"/>
    <property type="match status" value="1"/>
</dbReference>
<dbReference type="PANTHER" id="PTHR30036:SF7">
    <property type="entry name" value="ABC TRANSPORTER PERIPLASMIC-BINDING PROTEIN YPHF"/>
    <property type="match status" value="1"/>
</dbReference>
<dbReference type="PANTHER" id="PTHR30036">
    <property type="entry name" value="D-XYLOSE-BINDING PERIPLASMIC PROTEIN"/>
    <property type="match status" value="1"/>
</dbReference>
<dbReference type="Pfam" id="PF13407">
    <property type="entry name" value="Peripla_BP_4"/>
    <property type="match status" value="1"/>
</dbReference>
<dbReference type="SUPFAM" id="SSF53822">
    <property type="entry name" value="Periplasmic binding protein-like I"/>
    <property type="match status" value="1"/>
</dbReference>
<accession>P0C887</accession>